<keyword id="KW-0067">ATP-binding</keyword>
<keyword id="KW-0963">Cytoplasm</keyword>
<keyword id="KW-0324">Glycolysis</keyword>
<keyword id="KW-0418">Kinase</keyword>
<keyword id="KW-0547">Nucleotide-binding</keyword>
<keyword id="KW-1185">Reference proteome</keyword>
<keyword id="KW-0808">Transferase</keyword>
<feature type="chain" id="PRO_0000146013" description="Phosphoglycerate kinase">
    <location>
        <begin position="1"/>
        <end position="403"/>
    </location>
</feature>
<feature type="binding site" evidence="1">
    <location>
        <begin position="22"/>
        <end position="24"/>
    </location>
    <ligand>
        <name>substrate</name>
    </ligand>
</feature>
<feature type="binding site" evidence="1">
    <location>
        <position position="37"/>
    </location>
    <ligand>
        <name>substrate</name>
    </ligand>
</feature>
<feature type="binding site" evidence="1">
    <location>
        <begin position="60"/>
        <end position="63"/>
    </location>
    <ligand>
        <name>substrate</name>
    </ligand>
</feature>
<feature type="binding site" evidence="1">
    <location>
        <position position="119"/>
    </location>
    <ligand>
        <name>substrate</name>
    </ligand>
</feature>
<feature type="binding site" evidence="1">
    <location>
        <position position="156"/>
    </location>
    <ligand>
        <name>substrate</name>
    </ligand>
</feature>
<feature type="binding site" evidence="1">
    <location>
        <position position="206"/>
    </location>
    <ligand>
        <name>ATP</name>
        <dbReference type="ChEBI" id="CHEBI:30616"/>
    </ligand>
</feature>
<feature type="binding site" evidence="1">
    <location>
        <position position="302"/>
    </location>
    <ligand>
        <name>ATP</name>
        <dbReference type="ChEBI" id="CHEBI:30616"/>
    </ligand>
</feature>
<feature type="binding site" evidence="1">
    <location>
        <position position="333"/>
    </location>
    <ligand>
        <name>ATP</name>
        <dbReference type="ChEBI" id="CHEBI:30616"/>
    </ligand>
</feature>
<feature type="binding site" evidence="1">
    <location>
        <begin position="359"/>
        <end position="362"/>
    </location>
    <ligand>
        <name>ATP</name>
        <dbReference type="ChEBI" id="CHEBI:30616"/>
    </ligand>
</feature>
<name>PGK_STRCO</name>
<organism>
    <name type="scientific">Streptomyces coelicolor (strain ATCC BAA-471 / A3(2) / M145)</name>
    <dbReference type="NCBI Taxonomy" id="100226"/>
    <lineage>
        <taxon>Bacteria</taxon>
        <taxon>Bacillati</taxon>
        <taxon>Actinomycetota</taxon>
        <taxon>Actinomycetes</taxon>
        <taxon>Kitasatosporales</taxon>
        <taxon>Streptomycetaceae</taxon>
        <taxon>Streptomyces</taxon>
        <taxon>Streptomyces albidoflavus group</taxon>
    </lineage>
</organism>
<dbReference type="EC" id="2.7.2.3"/>
<dbReference type="EMBL" id="AL939110">
    <property type="protein sequence ID" value="CAB38136.1"/>
    <property type="molecule type" value="Genomic_DNA"/>
</dbReference>
<dbReference type="PIR" id="T36019">
    <property type="entry name" value="T36019"/>
</dbReference>
<dbReference type="RefSeq" id="NP_626210.1">
    <property type="nucleotide sequence ID" value="NC_003888.3"/>
</dbReference>
<dbReference type="RefSeq" id="WP_011028057.1">
    <property type="nucleotide sequence ID" value="NZ_VNID01000001.1"/>
</dbReference>
<dbReference type="SMR" id="Q9Z519"/>
<dbReference type="FunCoup" id="Q9Z519">
    <property type="interactions" value="441"/>
</dbReference>
<dbReference type="STRING" id="100226.gene:17759543"/>
<dbReference type="PaxDb" id="100226-SCO1946"/>
<dbReference type="KEGG" id="sco:SCO1946"/>
<dbReference type="PATRIC" id="fig|100226.15.peg.1973"/>
<dbReference type="eggNOG" id="COG0126">
    <property type="taxonomic scope" value="Bacteria"/>
</dbReference>
<dbReference type="HOGENOM" id="CLU_025427_0_2_11"/>
<dbReference type="InParanoid" id="Q9Z519"/>
<dbReference type="OrthoDB" id="9808460at2"/>
<dbReference type="PhylomeDB" id="Q9Z519"/>
<dbReference type="UniPathway" id="UPA00109">
    <property type="reaction ID" value="UER00185"/>
</dbReference>
<dbReference type="Proteomes" id="UP000001973">
    <property type="component" value="Chromosome"/>
</dbReference>
<dbReference type="GO" id="GO:0005829">
    <property type="term" value="C:cytosol"/>
    <property type="evidence" value="ECO:0000318"/>
    <property type="project" value="GO_Central"/>
</dbReference>
<dbReference type="GO" id="GO:0043531">
    <property type="term" value="F:ADP binding"/>
    <property type="evidence" value="ECO:0000318"/>
    <property type="project" value="GO_Central"/>
</dbReference>
<dbReference type="GO" id="GO:0005524">
    <property type="term" value="F:ATP binding"/>
    <property type="evidence" value="ECO:0000318"/>
    <property type="project" value="GO_Central"/>
</dbReference>
<dbReference type="GO" id="GO:0004618">
    <property type="term" value="F:phosphoglycerate kinase activity"/>
    <property type="evidence" value="ECO:0000318"/>
    <property type="project" value="GO_Central"/>
</dbReference>
<dbReference type="GO" id="GO:0006094">
    <property type="term" value="P:gluconeogenesis"/>
    <property type="evidence" value="ECO:0000318"/>
    <property type="project" value="GO_Central"/>
</dbReference>
<dbReference type="GO" id="GO:0006096">
    <property type="term" value="P:glycolytic process"/>
    <property type="evidence" value="ECO:0000318"/>
    <property type="project" value="GO_Central"/>
</dbReference>
<dbReference type="FunFam" id="3.40.50.1260:FF:000006">
    <property type="entry name" value="Phosphoglycerate kinase"/>
    <property type="match status" value="1"/>
</dbReference>
<dbReference type="FunFam" id="3.40.50.1260:FF:000031">
    <property type="entry name" value="Phosphoglycerate kinase 1"/>
    <property type="match status" value="1"/>
</dbReference>
<dbReference type="Gene3D" id="3.40.50.1260">
    <property type="entry name" value="Phosphoglycerate kinase, N-terminal domain"/>
    <property type="match status" value="2"/>
</dbReference>
<dbReference type="HAMAP" id="MF_00145">
    <property type="entry name" value="Phosphoglyc_kinase"/>
    <property type="match status" value="1"/>
</dbReference>
<dbReference type="InterPro" id="IPR001576">
    <property type="entry name" value="Phosphoglycerate_kinase"/>
</dbReference>
<dbReference type="InterPro" id="IPR015911">
    <property type="entry name" value="Phosphoglycerate_kinase_CS"/>
</dbReference>
<dbReference type="InterPro" id="IPR015824">
    <property type="entry name" value="Phosphoglycerate_kinase_N"/>
</dbReference>
<dbReference type="InterPro" id="IPR036043">
    <property type="entry name" value="Phosphoglycerate_kinase_sf"/>
</dbReference>
<dbReference type="PANTHER" id="PTHR11406">
    <property type="entry name" value="PHOSPHOGLYCERATE KINASE"/>
    <property type="match status" value="1"/>
</dbReference>
<dbReference type="PANTHER" id="PTHR11406:SF23">
    <property type="entry name" value="PHOSPHOGLYCERATE KINASE 1, CHLOROPLASTIC-RELATED"/>
    <property type="match status" value="1"/>
</dbReference>
<dbReference type="Pfam" id="PF00162">
    <property type="entry name" value="PGK"/>
    <property type="match status" value="1"/>
</dbReference>
<dbReference type="PIRSF" id="PIRSF000724">
    <property type="entry name" value="Pgk"/>
    <property type="match status" value="1"/>
</dbReference>
<dbReference type="PRINTS" id="PR00477">
    <property type="entry name" value="PHGLYCKINASE"/>
</dbReference>
<dbReference type="SUPFAM" id="SSF53748">
    <property type="entry name" value="Phosphoglycerate kinase"/>
    <property type="match status" value="1"/>
</dbReference>
<dbReference type="PROSITE" id="PS00111">
    <property type="entry name" value="PGLYCERATE_KINASE"/>
    <property type="match status" value="1"/>
</dbReference>
<sequence>MKTIDELLSEGVAGKRVFVRADLNVPLDGTTITDDGRIRAVVPTVKALADAGARVIVASHLGRPKGAPDPAFSLAPAAARLGELLGADVAFAEDTVGSSAEAVVTGLADGGVAVIENLRFNAGETSKDDAERAAFADKLAGLADVYVGDGFGAVHRKHASVFDLPKRLPHYAGYLIATEVGVLKKLTDEVKRPYVVALGGAKVSDKLAVIDQLLGKADRLLIGGGMAYTFLKAKGYEVGISLLQEDQIPAVKEYIERAEKNGVELVLPVDVLVAPEFPDLKTKAPANPTTVAADAIPADQEGLDIGPETRKLYASKLADAGTVFWNGPMGVFEHPDYAEGTKAVAQALVDAPGFTVVGGGDSAAAVRTLGFDENAFGHISTGGGASLEYLEGKTLPGLAALED</sequence>
<evidence type="ECO:0000250" key="1"/>
<evidence type="ECO:0000305" key="2"/>
<proteinExistence type="inferred from homology"/>
<accession>Q9Z519</accession>
<comment type="catalytic activity">
    <reaction>
        <text>(2R)-3-phosphoglycerate + ATP = (2R)-3-phospho-glyceroyl phosphate + ADP</text>
        <dbReference type="Rhea" id="RHEA:14801"/>
        <dbReference type="ChEBI" id="CHEBI:30616"/>
        <dbReference type="ChEBI" id="CHEBI:57604"/>
        <dbReference type="ChEBI" id="CHEBI:58272"/>
        <dbReference type="ChEBI" id="CHEBI:456216"/>
        <dbReference type="EC" id="2.7.2.3"/>
    </reaction>
</comment>
<comment type="pathway">
    <text>Carbohydrate degradation; glycolysis; pyruvate from D-glyceraldehyde 3-phosphate: step 2/5.</text>
</comment>
<comment type="subunit">
    <text evidence="1">Monomer.</text>
</comment>
<comment type="subcellular location">
    <subcellularLocation>
        <location evidence="2">Cytoplasm</location>
    </subcellularLocation>
</comment>
<comment type="similarity">
    <text evidence="2">Belongs to the phosphoglycerate kinase family.</text>
</comment>
<protein>
    <recommendedName>
        <fullName>Phosphoglycerate kinase</fullName>
        <ecNumber>2.7.2.3</ecNumber>
    </recommendedName>
</protein>
<gene>
    <name type="primary">pgk</name>
    <name type="ordered locus">SCO1946</name>
    <name type="ORF">SCC54.06c</name>
</gene>
<reference key="1">
    <citation type="journal article" date="2002" name="Nature">
        <title>Complete genome sequence of the model actinomycete Streptomyces coelicolor A3(2).</title>
        <authorList>
            <person name="Bentley S.D."/>
            <person name="Chater K.F."/>
            <person name="Cerdeno-Tarraga A.-M."/>
            <person name="Challis G.L."/>
            <person name="Thomson N.R."/>
            <person name="James K.D."/>
            <person name="Harris D.E."/>
            <person name="Quail M.A."/>
            <person name="Kieser H."/>
            <person name="Harper D."/>
            <person name="Bateman A."/>
            <person name="Brown S."/>
            <person name="Chandra G."/>
            <person name="Chen C.W."/>
            <person name="Collins M."/>
            <person name="Cronin A."/>
            <person name="Fraser A."/>
            <person name="Goble A."/>
            <person name="Hidalgo J."/>
            <person name="Hornsby T."/>
            <person name="Howarth S."/>
            <person name="Huang C.-H."/>
            <person name="Kieser T."/>
            <person name="Larke L."/>
            <person name="Murphy L.D."/>
            <person name="Oliver K."/>
            <person name="O'Neil S."/>
            <person name="Rabbinowitsch E."/>
            <person name="Rajandream M.A."/>
            <person name="Rutherford K.M."/>
            <person name="Rutter S."/>
            <person name="Seeger K."/>
            <person name="Saunders D."/>
            <person name="Sharp S."/>
            <person name="Squares R."/>
            <person name="Squares S."/>
            <person name="Taylor K."/>
            <person name="Warren T."/>
            <person name="Wietzorrek A."/>
            <person name="Woodward J.R."/>
            <person name="Barrell B.G."/>
            <person name="Parkhill J."/>
            <person name="Hopwood D.A."/>
        </authorList>
    </citation>
    <scope>NUCLEOTIDE SEQUENCE [LARGE SCALE GENOMIC DNA]</scope>
    <source>
        <strain>ATCC BAA-471 / A3(2) / M145</strain>
    </source>
</reference>